<proteinExistence type="inferred from homology"/>
<protein>
    <recommendedName>
        <fullName evidence="1">Uridylate kinase</fullName>
        <shortName evidence="1">UK</shortName>
        <ecNumber evidence="1">2.7.4.22</ecNumber>
    </recommendedName>
    <alternativeName>
        <fullName evidence="1">Uridine monophosphate kinase</fullName>
        <shortName evidence="1">UMP kinase</shortName>
        <shortName evidence="1">UMPK</shortName>
    </alternativeName>
</protein>
<name>PYRH_PYRAB</name>
<organism>
    <name type="scientific">Pyrococcus abyssi (strain GE5 / Orsay)</name>
    <dbReference type="NCBI Taxonomy" id="272844"/>
    <lineage>
        <taxon>Archaea</taxon>
        <taxon>Methanobacteriati</taxon>
        <taxon>Methanobacteriota</taxon>
        <taxon>Thermococci</taxon>
        <taxon>Thermococcales</taxon>
        <taxon>Thermococcaceae</taxon>
        <taxon>Pyrococcus</taxon>
    </lineage>
</organism>
<reference key="1">
    <citation type="journal article" date="2003" name="Mol. Microbiol.">
        <title>An integrated analysis of the genome of the hyperthermophilic archaeon Pyrococcus abyssi.</title>
        <authorList>
            <person name="Cohen G.N."/>
            <person name="Barbe V."/>
            <person name="Flament D."/>
            <person name="Galperin M."/>
            <person name="Heilig R."/>
            <person name="Lecompte O."/>
            <person name="Poch O."/>
            <person name="Prieur D."/>
            <person name="Querellou J."/>
            <person name="Ripp R."/>
            <person name="Thierry J.-C."/>
            <person name="Van der Oost J."/>
            <person name="Weissenbach J."/>
            <person name="Zivanovic Y."/>
            <person name="Forterre P."/>
        </authorList>
    </citation>
    <scope>NUCLEOTIDE SEQUENCE [LARGE SCALE GENOMIC DNA]</scope>
    <source>
        <strain>GE5 / Orsay</strain>
    </source>
</reference>
<reference key="2">
    <citation type="journal article" date="2012" name="Curr. Microbiol.">
        <title>Re-annotation of two hyperthermophilic archaea Pyrococcus abyssi GE5 and Pyrococcus furiosus DSM 3638.</title>
        <authorList>
            <person name="Gao J."/>
            <person name="Wang J."/>
        </authorList>
    </citation>
    <scope>GENOME REANNOTATION</scope>
    <source>
        <strain>GE5 / Orsay</strain>
    </source>
</reference>
<accession>Q9V0P2</accession>
<accession>G8ZGU8</accession>
<gene>
    <name evidence="1" type="primary">pyrH</name>
    <name type="ordered locus">PYRAB07470</name>
    <name type="ORF">PAB1870</name>
</gene>
<comment type="function">
    <text evidence="1">Catalyzes the reversible phosphorylation of UMP to UDP.</text>
</comment>
<comment type="catalytic activity">
    <reaction evidence="1">
        <text>UMP + ATP = UDP + ADP</text>
        <dbReference type="Rhea" id="RHEA:24400"/>
        <dbReference type="ChEBI" id="CHEBI:30616"/>
        <dbReference type="ChEBI" id="CHEBI:57865"/>
        <dbReference type="ChEBI" id="CHEBI:58223"/>
        <dbReference type="ChEBI" id="CHEBI:456216"/>
        <dbReference type="EC" id="2.7.4.22"/>
    </reaction>
</comment>
<comment type="activity regulation">
    <text evidence="1">Inhibited by UTP.</text>
</comment>
<comment type="pathway">
    <text evidence="1">Pyrimidine metabolism; CTP biosynthesis via de novo pathway; UDP from UMP (UMPK route): step 1/1.</text>
</comment>
<comment type="subunit">
    <text evidence="1">Homohexamer.</text>
</comment>
<comment type="subcellular location">
    <subcellularLocation>
        <location evidence="1">Cytoplasm</location>
    </subcellularLocation>
</comment>
<comment type="similarity">
    <text evidence="1">Belongs to the UMP kinase family.</text>
</comment>
<evidence type="ECO:0000255" key="1">
    <source>
        <dbReference type="HAMAP-Rule" id="MF_01220"/>
    </source>
</evidence>
<keyword id="KW-0067">ATP-binding</keyword>
<keyword id="KW-0963">Cytoplasm</keyword>
<keyword id="KW-0418">Kinase</keyword>
<keyword id="KW-0547">Nucleotide-binding</keyword>
<keyword id="KW-0665">Pyrimidine biosynthesis</keyword>
<keyword id="KW-0808">Transferase</keyword>
<dbReference type="EC" id="2.7.4.22" evidence="1"/>
<dbReference type="EMBL" id="AJ248285">
    <property type="protein sequence ID" value="CAB49661.1"/>
    <property type="molecule type" value="Genomic_DNA"/>
</dbReference>
<dbReference type="EMBL" id="HE613800">
    <property type="protein sequence ID" value="CCE70143.1"/>
    <property type="molecule type" value="Genomic_DNA"/>
</dbReference>
<dbReference type="PIR" id="D75118">
    <property type="entry name" value="D75118"/>
</dbReference>
<dbReference type="RefSeq" id="WP_010867869.1">
    <property type="nucleotide sequence ID" value="NC_000868.1"/>
</dbReference>
<dbReference type="SMR" id="Q9V0P2"/>
<dbReference type="STRING" id="272844.PAB1870"/>
<dbReference type="KEGG" id="pab:PAB1870"/>
<dbReference type="PATRIC" id="fig|272844.11.peg.787"/>
<dbReference type="eggNOG" id="arCOG00858">
    <property type="taxonomic scope" value="Archaea"/>
</dbReference>
<dbReference type="HOGENOM" id="CLU_079546_0_0_2"/>
<dbReference type="OrthoDB" id="372251at2157"/>
<dbReference type="PhylomeDB" id="Q9V0P2"/>
<dbReference type="UniPathway" id="UPA00159">
    <property type="reaction ID" value="UER00275"/>
</dbReference>
<dbReference type="Proteomes" id="UP000000810">
    <property type="component" value="Chromosome"/>
</dbReference>
<dbReference type="Proteomes" id="UP000009139">
    <property type="component" value="Chromosome"/>
</dbReference>
<dbReference type="GO" id="GO:0005737">
    <property type="term" value="C:cytoplasm"/>
    <property type="evidence" value="ECO:0007669"/>
    <property type="project" value="UniProtKB-SubCell"/>
</dbReference>
<dbReference type="GO" id="GO:0005524">
    <property type="term" value="F:ATP binding"/>
    <property type="evidence" value="ECO:0007669"/>
    <property type="project" value="UniProtKB-KW"/>
</dbReference>
<dbReference type="GO" id="GO:0033862">
    <property type="term" value="F:UMP kinase activity"/>
    <property type="evidence" value="ECO:0007669"/>
    <property type="project" value="UniProtKB-EC"/>
</dbReference>
<dbReference type="GO" id="GO:0044210">
    <property type="term" value="P:'de novo' CTP biosynthetic process"/>
    <property type="evidence" value="ECO:0007669"/>
    <property type="project" value="UniProtKB-UniRule"/>
</dbReference>
<dbReference type="GO" id="GO:0006225">
    <property type="term" value="P:UDP biosynthetic process"/>
    <property type="evidence" value="ECO:0007669"/>
    <property type="project" value="TreeGrafter"/>
</dbReference>
<dbReference type="CDD" id="cd04253">
    <property type="entry name" value="AAK_UMPK-PyrH-Pf"/>
    <property type="match status" value="1"/>
</dbReference>
<dbReference type="FunFam" id="3.40.1160.10:FF:000030">
    <property type="entry name" value="Uridylate kinase"/>
    <property type="match status" value="1"/>
</dbReference>
<dbReference type="Gene3D" id="3.40.1160.10">
    <property type="entry name" value="Acetylglutamate kinase-like"/>
    <property type="match status" value="1"/>
</dbReference>
<dbReference type="HAMAP" id="MF_01220_A">
    <property type="entry name" value="PyrH_A"/>
    <property type="match status" value="1"/>
</dbReference>
<dbReference type="InterPro" id="IPR036393">
    <property type="entry name" value="AceGlu_kinase-like_sf"/>
</dbReference>
<dbReference type="InterPro" id="IPR001048">
    <property type="entry name" value="Asp/Glu/Uridylate_kinase"/>
</dbReference>
<dbReference type="InterPro" id="IPR011817">
    <property type="entry name" value="Uridylate_kinase"/>
</dbReference>
<dbReference type="InterPro" id="IPR011818">
    <property type="entry name" value="Uridylate_kinase_arch/spir"/>
</dbReference>
<dbReference type="NCBIfam" id="TIGR02076">
    <property type="entry name" value="pyrH_arch"/>
    <property type="match status" value="1"/>
</dbReference>
<dbReference type="PANTHER" id="PTHR42833">
    <property type="entry name" value="URIDYLATE KINASE"/>
    <property type="match status" value="1"/>
</dbReference>
<dbReference type="PANTHER" id="PTHR42833:SF4">
    <property type="entry name" value="URIDYLATE KINASE PUMPKIN, CHLOROPLASTIC"/>
    <property type="match status" value="1"/>
</dbReference>
<dbReference type="Pfam" id="PF00696">
    <property type="entry name" value="AA_kinase"/>
    <property type="match status" value="1"/>
</dbReference>
<dbReference type="PIRSF" id="PIRSF005650">
    <property type="entry name" value="Uridylate_kin"/>
    <property type="match status" value="1"/>
</dbReference>
<dbReference type="SUPFAM" id="SSF53633">
    <property type="entry name" value="Carbamate kinase-like"/>
    <property type="match status" value="1"/>
</dbReference>
<sequence length="225" mass="24504">MRIVFDIGGSVLVPSKPDVEFIDKLSYELTKVSEDHEIAIVVGGGKTAREYIEVASKFNANETFKDYLGIQITRANAMLLIAALKERAYPQVVTDFWEAWKAIQLKKIPVMGGTHPGHTTDAVSALLAEFLGADLLVVITNVDGVYTDDPRKNPNAKKLEKISARELVQIVGKSTSKAGASTVIDPLAASIILRSGIKTYIIGKKDALRLFDVIRGKHEGTTVEP</sequence>
<feature type="chain" id="PRO_0000143921" description="Uridylate kinase">
    <location>
        <begin position="1"/>
        <end position="225"/>
    </location>
</feature>
<feature type="binding site" evidence="1">
    <location>
        <begin position="9"/>
        <end position="10"/>
    </location>
    <ligand>
        <name>ATP</name>
        <dbReference type="ChEBI" id="CHEBI:30616"/>
    </ligand>
</feature>
<feature type="binding site" evidence="1">
    <location>
        <position position="44"/>
    </location>
    <ligand>
        <name>UMP</name>
        <dbReference type="ChEBI" id="CHEBI:57865"/>
    </ligand>
</feature>
<feature type="binding site" evidence="1">
    <location>
        <position position="45"/>
    </location>
    <ligand>
        <name>ATP</name>
        <dbReference type="ChEBI" id="CHEBI:30616"/>
    </ligand>
</feature>
<feature type="binding site" evidence="1">
    <location>
        <position position="49"/>
    </location>
    <ligand>
        <name>ATP</name>
        <dbReference type="ChEBI" id="CHEBI:30616"/>
    </ligand>
</feature>
<feature type="binding site" evidence="1">
    <location>
        <position position="66"/>
    </location>
    <ligand>
        <name>UMP</name>
        <dbReference type="ChEBI" id="CHEBI:57865"/>
    </ligand>
</feature>
<feature type="binding site" evidence="1">
    <location>
        <begin position="114"/>
        <end position="120"/>
    </location>
    <ligand>
        <name>UMP</name>
        <dbReference type="ChEBI" id="CHEBI:57865"/>
    </ligand>
</feature>
<feature type="binding site" evidence="1">
    <location>
        <position position="140"/>
    </location>
    <ligand>
        <name>ATP</name>
        <dbReference type="ChEBI" id="CHEBI:30616"/>
    </ligand>
</feature>
<feature type="binding site" evidence="1">
    <location>
        <position position="141"/>
    </location>
    <ligand>
        <name>ATP</name>
        <dbReference type="ChEBI" id="CHEBI:30616"/>
    </ligand>
</feature>
<feature type="binding site" evidence="1">
    <location>
        <position position="146"/>
    </location>
    <ligand>
        <name>ATP</name>
        <dbReference type="ChEBI" id="CHEBI:30616"/>
    </ligand>
</feature>
<feature type="binding site" evidence="1">
    <location>
        <position position="149"/>
    </location>
    <ligand>
        <name>ATP</name>
        <dbReference type="ChEBI" id="CHEBI:30616"/>
    </ligand>
</feature>